<name>FMT_PARC0</name>
<feature type="chain" id="PRO_1000020007" description="Methionyl-tRNA formyltransferase">
    <location>
        <begin position="1"/>
        <end position="329"/>
    </location>
</feature>
<feature type="binding site" evidence="1">
    <location>
        <begin position="117"/>
        <end position="120"/>
    </location>
    <ligand>
        <name>(6S)-5,6,7,8-tetrahydrofolate</name>
        <dbReference type="ChEBI" id="CHEBI:57453"/>
    </ligand>
</feature>
<keyword id="KW-0648">Protein biosynthesis</keyword>
<keyword id="KW-0808">Transferase</keyword>
<comment type="function">
    <text evidence="1">Attaches a formyl group to the free amino group of methionyl-tRNA(fMet). The formyl group appears to play a dual role in the initiator identity of N-formylmethionyl-tRNA by promoting its recognition by IF2 and preventing the misappropriation of this tRNA by the elongation apparatus.</text>
</comment>
<comment type="catalytic activity">
    <reaction evidence="1">
        <text>L-methionyl-tRNA(fMet) + (6R)-10-formyltetrahydrofolate = N-formyl-L-methionyl-tRNA(fMet) + (6S)-5,6,7,8-tetrahydrofolate + H(+)</text>
        <dbReference type="Rhea" id="RHEA:24380"/>
        <dbReference type="Rhea" id="RHEA-COMP:9952"/>
        <dbReference type="Rhea" id="RHEA-COMP:9953"/>
        <dbReference type="ChEBI" id="CHEBI:15378"/>
        <dbReference type="ChEBI" id="CHEBI:57453"/>
        <dbReference type="ChEBI" id="CHEBI:78530"/>
        <dbReference type="ChEBI" id="CHEBI:78844"/>
        <dbReference type="ChEBI" id="CHEBI:195366"/>
        <dbReference type="EC" id="2.1.2.9"/>
    </reaction>
</comment>
<comment type="similarity">
    <text evidence="1">Belongs to the Fmt family.</text>
</comment>
<gene>
    <name evidence="1" type="primary">fmt</name>
    <name type="ordered locus">Aave_4690</name>
</gene>
<sequence>MKIIFAGTPEFARVALERLLAAGAEVPLVLTQPDRPAGRGMKLQASPVKQCALAHGIAVAQPRGLRLDGRYAEDAAAARAALEAAGADAMVVAAYGLILPQWVLDLPRLGCLNIHASLLPRWRGAAPIHRAIEAGDAETGVTIMQMDAGLDTGAMLLIEKTAIAPRETTATLHDRLADLGGRLIVEAMELAACGGLAATPQPAEGVTYAHKIEKAESAIDWKLPAAAIDRRVRAFDPFPGASTQCSAETIKVWGCEPLQVPPPEGAQPGEILQVDDAGVDVACGGPDGAAGVLRLTVLQRAGGKRLPVGDFLRGHPLAPGMVLGGGAGA</sequence>
<reference key="1">
    <citation type="submission" date="2006-12" db="EMBL/GenBank/DDBJ databases">
        <title>Complete sequence of Acidovorax avenae subsp. citrulli AAC00-1.</title>
        <authorList>
            <person name="Copeland A."/>
            <person name="Lucas S."/>
            <person name="Lapidus A."/>
            <person name="Barry K."/>
            <person name="Detter J.C."/>
            <person name="Glavina del Rio T."/>
            <person name="Dalin E."/>
            <person name="Tice H."/>
            <person name="Pitluck S."/>
            <person name="Kiss H."/>
            <person name="Brettin T."/>
            <person name="Bruce D."/>
            <person name="Han C."/>
            <person name="Tapia R."/>
            <person name="Gilna P."/>
            <person name="Schmutz J."/>
            <person name="Larimer F."/>
            <person name="Land M."/>
            <person name="Hauser L."/>
            <person name="Kyrpides N."/>
            <person name="Kim E."/>
            <person name="Stahl D."/>
            <person name="Richardson P."/>
        </authorList>
    </citation>
    <scope>NUCLEOTIDE SEQUENCE [LARGE SCALE GENOMIC DNA]</scope>
    <source>
        <strain>AAC00-1</strain>
    </source>
</reference>
<dbReference type="EC" id="2.1.2.9" evidence="1"/>
<dbReference type="EMBL" id="CP000512">
    <property type="protein sequence ID" value="ABM35225.1"/>
    <property type="molecule type" value="Genomic_DNA"/>
</dbReference>
<dbReference type="RefSeq" id="WP_011797691.1">
    <property type="nucleotide sequence ID" value="NC_008752.1"/>
</dbReference>
<dbReference type="SMR" id="A1TW87"/>
<dbReference type="STRING" id="397945.Aave_4690"/>
<dbReference type="KEGG" id="aav:Aave_4690"/>
<dbReference type="eggNOG" id="COG0223">
    <property type="taxonomic scope" value="Bacteria"/>
</dbReference>
<dbReference type="HOGENOM" id="CLU_033347_1_2_4"/>
<dbReference type="OrthoDB" id="9802815at2"/>
<dbReference type="Proteomes" id="UP000002596">
    <property type="component" value="Chromosome"/>
</dbReference>
<dbReference type="GO" id="GO:0005829">
    <property type="term" value="C:cytosol"/>
    <property type="evidence" value="ECO:0007669"/>
    <property type="project" value="TreeGrafter"/>
</dbReference>
<dbReference type="GO" id="GO:0004479">
    <property type="term" value="F:methionyl-tRNA formyltransferase activity"/>
    <property type="evidence" value="ECO:0007669"/>
    <property type="project" value="UniProtKB-UniRule"/>
</dbReference>
<dbReference type="CDD" id="cd08646">
    <property type="entry name" value="FMT_core_Met-tRNA-FMT_N"/>
    <property type="match status" value="1"/>
</dbReference>
<dbReference type="CDD" id="cd08704">
    <property type="entry name" value="Met_tRNA_FMT_C"/>
    <property type="match status" value="1"/>
</dbReference>
<dbReference type="Gene3D" id="3.10.25.10">
    <property type="entry name" value="Formyl transferase, C-terminal domain"/>
    <property type="match status" value="1"/>
</dbReference>
<dbReference type="Gene3D" id="3.40.50.170">
    <property type="entry name" value="Formyl transferase, N-terminal domain"/>
    <property type="match status" value="1"/>
</dbReference>
<dbReference type="HAMAP" id="MF_00182">
    <property type="entry name" value="Formyl_trans"/>
    <property type="match status" value="1"/>
</dbReference>
<dbReference type="InterPro" id="IPR005794">
    <property type="entry name" value="Fmt"/>
</dbReference>
<dbReference type="InterPro" id="IPR005793">
    <property type="entry name" value="Formyl_trans_C"/>
</dbReference>
<dbReference type="InterPro" id="IPR037022">
    <property type="entry name" value="Formyl_trans_C_sf"/>
</dbReference>
<dbReference type="InterPro" id="IPR002376">
    <property type="entry name" value="Formyl_transf_N"/>
</dbReference>
<dbReference type="InterPro" id="IPR036477">
    <property type="entry name" value="Formyl_transf_N_sf"/>
</dbReference>
<dbReference type="InterPro" id="IPR011034">
    <property type="entry name" value="Formyl_transferase-like_C_sf"/>
</dbReference>
<dbReference type="InterPro" id="IPR001555">
    <property type="entry name" value="GART_AS"/>
</dbReference>
<dbReference type="InterPro" id="IPR044135">
    <property type="entry name" value="Met-tRNA-FMT_C"/>
</dbReference>
<dbReference type="InterPro" id="IPR041711">
    <property type="entry name" value="Met-tRNA-FMT_N"/>
</dbReference>
<dbReference type="NCBIfam" id="TIGR00460">
    <property type="entry name" value="fmt"/>
    <property type="match status" value="1"/>
</dbReference>
<dbReference type="PANTHER" id="PTHR11138">
    <property type="entry name" value="METHIONYL-TRNA FORMYLTRANSFERASE"/>
    <property type="match status" value="1"/>
</dbReference>
<dbReference type="PANTHER" id="PTHR11138:SF5">
    <property type="entry name" value="METHIONYL-TRNA FORMYLTRANSFERASE, MITOCHONDRIAL"/>
    <property type="match status" value="1"/>
</dbReference>
<dbReference type="Pfam" id="PF02911">
    <property type="entry name" value="Formyl_trans_C"/>
    <property type="match status" value="1"/>
</dbReference>
<dbReference type="Pfam" id="PF00551">
    <property type="entry name" value="Formyl_trans_N"/>
    <property type="match status" value="1"/>
</dbReference>
<dbReference type="SUPFAM" id="SSF50486">
    <property type="entry name" value="FMT C-terminal domain-like"/>
    <property type="match status" value="1"/>
</dbReference>
<dbReference type="SUPFAM" id="SSF53328">
    <property type="entry name" value="Formyltransferase"/>
    <property type="match status" value="1"/>
</dbReference>
<dbReference type="PROSITE" id="PS00373">
    <property type="entry name" value="GART"/>
    <property type="match status" value="1"/>
</dbReference>
<organism>
    <name type="scientific">Paracidovorax citrulli (strain AAC00-1)</name>
    <name type="common">Acidovorax citrulli</name>
    <dbReference type="NCBI Taxonomy" id="397945"/>
    <lineage>
        <taxon>Bacteria</taxon>
        <taxon>Pseudomonadati</taxon>
        <taxon>Pseudomonadota</taxon>
        <taxon>Betaproteobacteria</taxon>
        <taxon>Burkholderiales</taxon>
        <taxon>Comamonadaceae</taxon>
        <taxon>Paracidovorax</taxon>
    </lineage>
</organism>
<proteinExistence type="inferred from homology"/>
<accession>A1TW87</accession>
<evidence type="ECO:0000255" key="1">
    <source>
        <dbReference type="HAMAP-Rule" id="MF_00182"/>
    </source>
</evidence>
<protein>
    <recommendedName>
        <fullName evidence="1">Methionyl-tRNA formyltransferase</fullName>
        <ecNumber evidence="1">2.1.2.9</ecNumber>
    </recommendedName>
</protein>